<dbReference type="EC" id="7.4.2.10" evidence="1"/>
<dbReference type="EMBL" id="CP000038">
    <property type="protein sequence ID" value="AAZ87558.1"/>
    <property type="status" value="ALT_INIT"/>
    <property type="molecule type" value="Genomic_DNA"/>
</dbReference>
<dbReference type="RefSeq" id="WP_001296993.1">
    <property type="nucleotide sequence ID" value="NC_007384.1"/>
</dbReference>
<dbReference type="SMR" id="Q3Z3V4"/>
<dbReference type="GeneID" id="93776595"/>
<dbReference type="KEGG" id="ssn:SSON_0811"/>
<dbReference type="HOGENOM" id="CLU_000604_86_2_6"/>
<dbReference type="Proteomes" id="UP000002529">
    <property type="component" value="Chromosome"/>
</dbReference>
<dbReference type="GO" id="GO:0005886">
    <property type="term" value="C:plasma membrane"/>
    <property type="evidence" value="ECO:0007669"/>
    <property type="project" value="UniProtKB-SubCell"/>
</dbReference>
<dbReference type="GO" id="GO:0005524">
    <property type="term" value="F:ATP binding"/>
    <property type="evidence" value="ECO:0007669"/>
    <property type="project" value="UniProtKB-KW"/>
</dbReference>
<dbReference type="GO" id="GO:0016887">
    <property type="term" value="F:ATP hydrolysis activity"/>
    <property type="evidence" value="ECO:0007669"/>
    <property type="project" value="InterPro"/>
</dbReference>
<dbReference type="GO" id="GO:0015833">
    <property type="term" value="P:peptide transport"/>
    <property type="evidence" value="ECO:0007669"/>
    <property type="project" value="InterPro"/>
</dbReference>
<dbReference type="GO" id="GO:0055085">
    <property type="term" value="P:transmembrane transport"/>
    <property type="evidence" value="ECO:0007669"/>
    <property type="project" value="UniProtKB-ARBA"/>
</dbReference>
<dbReference type="CDD" id="cd03257">
    <property type="entry name" value="ABC_NikE_OppD_transporters"/>
    <property type="match status" value="2"/>
</dbReference>
<dbReference type="FunFam" id="3.40.50.300:FF:001061">
    <property type="entry name" value="Glutathione import ATP-binding protein GsiA"/>
    <property type="match status" value="1"/>
</dbReference>
<dbReference type="FunFam" id="3.40.50.300:FF:000016">
    <property type="entry name" value="Oligopeptide ABC transporter ATP-binding component"/>
    <property type="match status" value="1"/>
</dbReference>
<dbReference type="Gene3D" id="3.40.50.300">
    <property type="entry name" value="P-loop containing nucleotide triphosphate hydrolases"/>
    <property type="match status" value="2"/>
</dbReference>
<dbReference type="InterPro" id="IPR003593">
    <property type="entry name" value="AAA+_ATPase"/>
</dbReference>
<dbReference type="InterPro" id="IPR050319">
    <property type="entry name" value="ABC_transp_ATP-bind"/>
</dbReference>
<dbReference type="InterPro" id="IPR003439">
    <property type="entry name" value="ABC_transporter-like_ATP-bd"/>
</dbReference>
<dbReference type="InterPro" id="IPR017871">
    <property type="entry name" value="ABC_transporter-like_CS"/>
</dbReference>
<dbReference type="InterPro" id="IPR013563">
    <property type="entry name" value="Oligopep_ABC_C"/>
</dbReference>
<dbReference type="InterPro" id="IPR027417">
    <property type="entry name" value="P-loop_NTPase"/>
</dbReference>
<dbReference type="NCBIfam" id="NF007613">
    <property type="entry name" value="PRK10261.1"/>
    <property type="match status" value="1"/>
</dbReference>
<dbReference type="NCBIfam" id="NF007739">
    <property type="entry name" value="PRK10419.1"/>
    <property type="match status" value="2"/>
</dbReference>
<dbReference type="NCBIfam" id="NF008453">
    <property type="entry name" value="PRK11308.1"/>
    <property type="match status" value="2"/>
</dbReference>
<dbReference type="PANTHER" id="PTHR43776:SF15">
    <property type="entry name" value="GLUTATHIONE IMPORT ATP-BINDING PROTEIN GSIA"/>
    <property type="match status" value="1"/>
</dbReference>
<dbReference type="PANTHER" id="PTHR43776">
    <property type="entry name" value="TRANSPORT ATP-BINDING PROTEIN"/>
    <property type="match status" value="1"/>
</dbReference>
<dbReference type="Pfam" id="PF00005">
    <property type="entry name" value="ABC_tran"/>
    <property type="match status" value="2"/>
</dbReference>
<dbReference type="Pfam" id="PF08352">
    <property type="entry name" value="oligo_HPY"/>
    <property type="match status" value="2"/>
</dbReference>
<dbReference type="SMART" id="SM00382">
    <property type="entry name" value="AAA"/>
    <property type="match status" value="2"/>
</dbReference>
<dbReference type="SUPFAM" id="SSF52540">
    <property type="entry name" value="P-loop containing nucleoside triphosphate hydrolases"/>
    <property type="match status" value="2"/>
</dbReference>
<dbReference type="PROSITE" id="PS00211">
    <property type="entry name" value="ABC_TRANSPORTER_1"/>
    <property type="match status" value="2"/>
</dbReference>
<dbReference type="PROSITE" id="PS50893">
    <property type="entry name" value="ABC_TRANSPORTER_2"/>
    <property type="match status" value="2"/>
</dbReference>
<name>GSIA_SHISS</name>
<reference key="1">
    <citation type="journal article" date="2005" name="Nucleic Acids Res.">
        <title>Genome dynamics and diversity of Shigella species, the etiologic agents of bacillary dysentery.</title>
        <authorList>
            <person name="Yang F."/>
            <person name="Yang J."/>
            <person name="Zhang X."/>
            <person name="Chen L."/>
            <person name="Jiang Y."/>
            <person name="Yan Y."/>
            <person name="Tang X."/>
            <person name="Wang J."/>
            <person name="Xiong Z."/>
            <person name="Dong J."/>
            <person name="Xue Y."/>
            <person name="Zhu Y."/>
            <person name="Xu X."/>
            <person name="Sun L."/>
            <person name="Chen S."/>
            <person name="Nie H."/>
            <person name="Peng J."/>
            <person name="Xu J."/>
            <person name="Wang Y."/>
            <person name="Yuan Z."/>
            <person name="Wen Y."/>
            <person name="Yao Z."/>
            <person name="Shen Y."/>
            <person name="Qiang B."/>
            <person name="Hou Y."/>
            <person name="Yu J."/>
            <person name="Jin Q."/>
        </authorList>
    </citation>
    <scope>NUCLEOTIDE SEQUENCE [LARGE SCALE GENOMIC DNA]</scope>
    <source>
        <strain>Ss046</strain>
    </source>
</reference>
<evidence type="ECO:0000250" key="1">
    <source>
        <dbReference type="UniProtKB" id="P75796"/>
    </source>
</evidence>
<evidence type="ECO:0000255" key="2">
    <source>
        <dbReference type="PROSITE-ProRule" id="PRU00434"/>
    </source>
</evidence>
<evidence type="ECO:0000305" key="3"/>
<accession>Q3Z3V4</accession>
<organism>
    <name type="scientific">Shigella sonnei (strain Ss046)</name>
    <dbReference type="NCBI Taxonomy" id="300269"/>
    <lineage>
        <taxon>Bacteria</taxon>
        <taxon>Pseudomonadati</taxon>
        <taxon>Pseudomonadota</taxon>
        <taxon>Gammaproteobacteria</taxon>
        <taxon>Enterobacterales</taxon>
        <taxon>Enterobacteriaceae</taxon>
        <taxon>Shigella</taxon>
    </lineage>
</organism>
<sequence length="623" mass="69087">MPHSDELDAGNVLAVENLNIAFMQDQQKIAAVRNLSFSLQRGETLAIVGESGSGKSVTALALMRLLEQAGGLVQCDKMLLQRRSREVIELSEQSAAQMRHVRGADMAMIFQEPMTSLNPVFTVGEQIAESIRLHQNASREEAMVEAKRMLDQVRIPEAQTILSRYPHQLSGGMRQRVMIAMALSCRPAVLIADEPTTALDVTIQAQILQLIKVLQKEMSMGVIFITHDMGVVAEIADRVLVMYQGEAVETGTVEQIFHAPQHPYTRALLAAVPQLGAMKGLDYPRRFPLISLEHPAKQAPPIEQKTVVDGEPVLRVRNLVTRFPLRSGLLNRVTREVHAVEKVSFDLWPGETLSLVGESGSGKSTTGRALLRLVESQGGEIIFNGQRIDTLSPGKLQALRRDIQFIFQDPYASLDPRQTIGDSIIEPLRVHGLLPGKDAAARVAWLLERVGLLPEHAWRYPHEFSGGQRQRICIARALALNPKVIIADEAVSALDVSIRGQIINLLLDLQRDFGIAYLFISHDMAVVERISHRVAVMYLGQIVEIGPRRAVFENPQHPYTRKLLAAVPVAEPSRQRPQRVLLSDDLPSNIHLRGEEVAAVSLQCVGPGHYVAQPQSEYAFMRR</sequence>
<keyword id="KW-0067">ATP-binding</keyword>
<keyword id="KW-0997">Cell inner membrane</keyword>
<keyword id="KW-1003">Cell membrane</keyword>
<keyword id="KW-0378">Hydrolase</keyword>
<keyword id="KW-0472">Membrane</keyword>
<keyword id="KW-0547">Nucleotide-binding</keyword>
<keyword id="KW-1185">Reference proteome</keyword>
<keyword id="KW-0677">Repeat</keyword>
<keyword id="KW-1278">Translocase</keyword>
<keyword id="KW-0813">Transport</keyword>
<comment type="function">
    <text evidence="1">Part of the ABC transporter complex GsiABCD involved in glutathione import. Responsible for energy coupling to the transport system.</text>
</comment>
<comment type="catalytic activity">
    <reaction evidence="1">
        <text>glutathione(out) + ATP + H2O = glutathione(in) + ADP + phosphate + H(+)</text>
        <dbReference type="Rhea" id="RHEA:29791"/>
        <dbReference type="ChEBI" id="CHEBI:15377"/>
        <dbReference type="ChEBI" id="CHEBI:15378"/>
        <dbReference type="ChEBI" id="CHEBI:30616"/>
        <dbReference type="ChEBI" id="CHEBI:43474"/>
        <dbReference type="ChEBI" id="CHEBI:57925"/>
        <dbReference type="ChEBI" id="CHEBI:456216"/>
        <dbReference type="EC" id="7.4.2.10"/>
    </reaction>
</comment>
<comment type="subunit">
    <text evidence="1">The complex is composed of two ATP-binding proteins (GsiA), two transmembrane proteins (GsiC and GsiD) and a solute-binding protein (GsiB).</text>
</comment>
<comment type="subcellular location">
    <subcellularLocation>
        <location evidence="1">Cell inner membrane</location>
        <topology evidence="1">Peripheral membrane protein</topology>
    </subcellularLocation>
</comment>
<comment type="similarity">
    <text evidence="3">Belongs to the ABC transporter superfamily. Glutathione importer (TC 3.A.1.5.11) family.</text>
</comment>
<comment type="sequence caution" evidence="3">
    <conflict type="erroneous initiation">
        <sequence resource="EMBL-CDS" id="AAZ87558"/>
    </conflict>
</comment>
<gene>
    <name evidence="1" type="primary">gsiA</name>
    <name type="ordered locus">SSON_0811</name>
</gene>
<proteinExistence type="inferred from homology"/>
<feature type="chain" id="PRO_0000280031" description="Glutathione import ATP-binding protein GsiA">
    <location>
        <begin position="1"/>
        <end position="623"/>
    </location>
</feature>
<feature type="domain" description="ABC transporter 1" evidence="2">
    <location>
        <begin position="15"/>
        <end position="269"/>
    </location>
</feature>
<feature type="domain" description="ABC transporter 2" evidence="2">
    <location>
        <begin position="314"/>
        <end position="564"/>
    </location>
</feature>
<feature type="binding site" evidence="2">
    <location>
        <begin position="49"/>
        <end position="56"/>
    </location>
    <ligand>
        <name>ATP</name>
        <dbReference type="ChEBI" id="CHEBI:30616"/>
    </ligand>
</feature>
<feature type="binding site" evidence="2">
    <location>
        <begin position="357"/>
        <end position="364"/>
    </location>
    <ligand>
        <name>ATP</name>
        <dbReference type="ChEBI" id="CHEBI:30616"/>
    </ligand>
</feature>
<protein>
    <recommendedName>
        <fullName evidence="1">Glutathione import ATP-binding protein GsiA</fullName>
        <ecNumber evidence="1">7.4.2.10</ecNumber>
    </recommendedName>
</protein>